<protein>
    <recommendedName>
        <fullName evidence="1">Probable malonic semialdehyde reductase RutE</fullName>
        <ecNumber evidence="1">1.1.1.298</ecNumber>
    </recommendedName>
</protein>
<dbReference type="EC" id="1.1.1.298" evidence="1"/>
<dbReference type="EMBL" id="CU928163">
    <property type="protein sequence ID" value="CAR12400.1"/>
    <property type="molecule type" value="Genomic_DNA"/>
</dbReference>
<dbReference type="RefSeq" id="WP_001001172.1">
    <property type="nucleotide sequence ID" value="NC_011751.1"/>
</dbReference>
<dbReference type="RefSeq" id="YP_002411944.1">
    <property type="nucleotide sequence ID" value="NC_011751.1"/>
</dbReference>
<dbReference type="SMR" id="B7N3G4"/>
<dbReference type="STRING" id="585056.ECUMN_1191"/>
<dbReference type="KEGG" id="eum:ECUMN_1191"/>
<dbReference type="PATRIC" id="fig|585056.7.peg.1388"/>
<dbReference type="HOGENOM" id="CLU_084441_0_0_6"/>
<dbReference type="Proteomes" id="UP000007097">
    <property type="component" value="Chromosome"/>
</dbReference>
<dbReference type="GO" id="GO:0035527">
    <property type="term" value="F:3-hydroxypropionate dehydrogenase (NADP+) activity"/>
    <property type="evidence" value="ECO:0007669"/>
    <property type="project" value="UniProtKB-UniRule"/>
</dbReference>
<dbReference type="GO" id="GO:0019740">
    <property type="term" value="P:nitrogen utilization"/>
    <property type="evidence" value="ECO:0007669"/>
    <property type="project" value="UniProtKB-UniRule"/>
</dbReference>
<dbReference type="GO" id="GO:0006212">
    <property type="term" value="P:uracil catabolic process"/>
    <property type="evidence" value="ECO:0007669"/>
    <property type="project" value="UniProtKB-UniRule"/>
</dbReference>
<dbReference type="CDD" id="cd02148">
    <property type="entry name" value="RutE-like"/>
    <property type="match status" value="1"/>
</dbReference>
<dbReference type="FunFam" id="3.40.109.10:FF:000003">
    <property type="entry name" value="Probable malonic semialdehyde reductase RutE"/>
    <property type="match status" value="1"/>
</dbReference>
<dbReference type="Gene3D" id="3.40.109.10">
    <property type="entry name" value="NADH Oxidase"/>
    <property type="match status" value="1"/>
</dbReference>
<dbReference type="HAMAP" id="MF_01204">
    <property type="entry name" value="Oxidoreductase_RutE_HadB"/>
    <property type="match status" value="1"/>
</dbReference>
<dbReference type="InterPro" id="IPR029479">
    <property type="entry name" value="Nitroreductase"/>
</dbReference>
<dbReference type="InterPro" id="IPR000415">
    <property type="entry name" value="Nitroreductase-like"/>
</dbReference>
<dbReference type="InterPro" id="IPR050461">
    <property type="entry name" value="Nitroreductase_HadB/RutE"/>
</dbReference>
<dbReference type="InterPro" id="IPR023936">
    <property type="entry name" value="RutE-like"/>
</dbReference>
<dbReference type="NCBIfam" id="NF003768">
    <property type="entry name" value="PRK05365.1"/>
    <property type="match status" value="1"/>
</dbReference>
<dbReference type="PANTHER" id="PTHR43543">
    <property type="entry name" value="MALONIC SEMIALDEHYDE REDUCTASE RUTE-RELATED"/>
    <property type="match status" value="1"/>
</dbReference>
<dbReference type="PANTHER" id="PTHR43543:SF1">
    <property type="entry name" value="MALONIC SEMIALDEHYDE REDUCTASE RUTE-RELATED"/>
    <property type="match status" value="1"/>
</dbReference>
<dbReference type="Pfam" id="PF00881">
    <property type="entry name" value="Nitroreductase"/>
    <property type="match status" value="1"/>
</dbReference>
<dbReference type="SUPFAM" id="SSF55469">
    <property type="entry name" value="FMN-dependent nitroreductase-like"/>
    <property type="match status" value="1"/>
</dbReference>
<evidence type="ECO:0000255" key="1">
    <source>
        <dbReference type="HAMAP-Rule" id="MF_01204"/>
    </source>
</evidence>
<reference key="1">
    <citation type="journal article" date="2009" name="PLoS Genet.">
        <title>Organised genome dynamics in the Escherichia coli species results in highly diverse adaptive paths.</title>
        <authorList>
            <person name="Touchon M."/>
            <person name="Hoede C."/>
            <person name="Tenaillon O."/>
            <person name="Barbe V."/>
            <person name="Baeriswyl S."/>
            <person name="Bidet P."/>
            <person name="Bingen E."/>
            <person name="Bonacorsi S."/>
            <person name="Bouchier C."/>
            <person name="Bouvet O."/>
            <person name="Calteau A."/>
            <person name="Chiapello H."/>
            <person name="Clermont O."/>
            <person name="Cruveiller S."/>
            <person name="Danchin A."/>
            <person name="Diard M."/>
            <person name="Dossat C."/>
            <person name="Karoui M.E."/>
            <person name="Frapy E."/>
            <person name="Garry L."/>
            <person name="Ghigo J.M."/>
            <person name="Gilles A.M."/>
            <person name="Johnson J."/>
            <person name="Le Bouguenec C."/>
            <person name="Lescat M."/>
            <person name="Mangenot S."/>
            <person name="Martinez-Jehanne V."/>
            <person name="Matic I."/>
            <person name="Nassif X."/>
            <person name="Oztas S."/>
            <person name="Petit M.A."/>
            <person name="Pichon C."/>
            <person name="Rouy Z."/>
            <person name="Ruf C.S."/>
            <person name="Schneider D."/>
            <person name="Tourret J."/>
            <person name="Vacherie B."/>
            <person name="Vallenet D."/>
            <person name="Medigue C."/>
            <person name="Rocha E.P.C."/>
            <person name="Denamur E."/>
        </authorList>
    </citation>
    <scope>NUCLEOTIDE SEQUENCE [LARGE SCALE GENOMIC DNA]</scope>
    <source>
        <strain>UMN026 / ExPEC</strain>
    </source>
</reference>
<gene>
    <name evidence="1" type="primary">rutE</name>
    <name type="ordered locus">ECUMN_1191</name>
</gene>
<comment type="function">
    <text evidence="1">May reduce toxic product malonic semialdehyde to 3-hydroxypropionic acid, which is excreted.</text>
</comment>
<comment type="catalytic activity">
    <reaction evidence="1">
        <text>3-hydroxypropanoate + NADP(+) = 3-oxopropanoate + NADPH + H(+)</text>
        <dbReference type="Rhea" id="RHEA:26438"/>
        <dbReference type="ChEBI" id="CHEBI:15378"/>
        <dbReference type="ChEBI" id="CHEBI:16510"/>
        <dbReference type="ChEBI" id="CHEBI:33190"/>
        <dbReference type="ChEBI" id="CHEBI:57783"/>
        <dbReference type="ChEBI" id="CHEBI:58349"/>
        <dbReference type="EC" id="1.1.1.298"/>
    </reaction>
</comment>
<comment type="cofactor">
    <cofactor evidence="1">
        <name>FMN</name>
        <dbReference type="ChEBI" id="CHEBI:58210"/>
    </cofactor>
</comment>
<comment type="induction">
    <text evidence="1">Up-regulated by the nitrogen regulatory protein C (NtrC also called GlnG) and repressed by RutR.</text>
</comment>
<comment type="similarity">
    <text evidence="1">Belongs to the nitroreductase family. HadB/RutE subfamily.</text>
</comment>
<name>RUTE_ECOLU</name>
<keyword id="KW-0285">Flavoprotein</keyword>
<keyword id="KW-0288">FMN</keyword>
<keyword id="KW-0520">NAD</keyword>
<keyword id="KW-0521">NADP</keyword>
<keyword id="KW-0560">Oxidoreductase</keyword>
<organism>
    <name type="scientific">Escherichia coli O17:K52:H18 (strain UMN026 / ExPEC)</name>
    <dbReference type="NCBI Taxonomy" id="585056"/>
    <lineage>
        <taxon>Bacteria</taxon>
        <taxon>Pseudomonadati</taxon>
        <taxon>Pseudomonadota</taxon>
        <taxon>Gammaproteobacteria</taxon>
        <taxon>Enterobacterales</taxon>
        <taxon>Enterobacteriaceae</taxon>
        <taxon>Escherichia</taxon>
    </lineage>
</organism>
<accession>B7N3G4</accession>
<sequence length="196" mass="21597">MNEAVSPGALSTLFTDARTHNGWRETPVSDETLREIYALMKWGPTSANCSPARIVFIRTAEGKERLRPALSSGNLQKTLTAPVTAIVAWDSEFYERLPQLFPHGDARSWFTSSPQLAEETAFRNSSMQAAYLIVACRALGLDTGPMSGFDRQHVDDAFFTGSTLKSNLLINIGYGDSSKLYARLPRLSFEEACGLL</sequence>
<proteinExistence type="inferred from homology"/>
<feature type="chain" id="PRO_1000138694" description="Probable malonic semialdehyde reductase RutE">
    <location>
        <begin position="1"/>
        <end position="196"/>
    </location>
</feature>